<protein>
    <recommendedName>
        <fullName evidence="1">Phosphate acyltransferase</fullName>
        <ecNumber evidence="1">2.3.1.274</ecNumber>
    </recommendedName>
    <alternativeName>
        <fullName evidence="1">Acyl-ACP phosphotransacylase</fullName>
    </alternativeName>
    <alternativeName>
        <fullName evidence="1">Acyl-[acyl-carrier-protein]--phosphate acyltransferase</fullName>
    </alternativeName>
    <alternativeName>
        <fullName evidence="1">Phosphate-acyl-ACP acyltransferase</fullName>
    </alternativeName>
</protein>
<reference key="1">
    <citation type="submission" date="2008-05" db="EMBL/GenBank/DDBJ databases">
        <title>Complete sequence of chromosome 1 of Ralstonia pickettii 12J.</title>
        <authorList>
            <person name="Lucas S."/>
            <person name="Copeland A."/>
            <person name="Lapidus A."/>
            <person name="Glavina del Rio T."/>
            <person name="Dalin E."/>
            <person name="Tice H."/>
            <person name="Bruce D."/>
            <person name="Goodwin L."/>
            <person name="Pitluck S."/>
            <person name="Meincke L."/>
            <person name="Brettin T."/>
            <person name="Detter J.C."/>
            <person name="Han C."/>
            <person name="Kuske C.R."/>
            <person name="Schmutz J."/>
            <person name="Larimer F."/>
            <person name="Land M."/>
            <person name="Hauser L."/>
            <person name="Kyrpides N."/>
            <person name="Mikhailova N."/>
            <person name="Marsh T."/>
            <person name="Richardson P."/>
        </authorList>
    </citation>
    <scope>NUCLEOTIDE SEQUENCE [LARGE SCALE GENOMIC DNA]</scope>
    <source>
        <strain>12J</strain>
    </source>
</reference>
<organism>
    <name type="scientific">Ralstonia pickettii (strain 12J)</name>
    <dbReference type="NCBI Taxonomy" id="402626"/>
    <lineage>
        <taxon>Bacteria</taxon>
        <taxon>Pseudomonadati</taxon>
        <taxon>Pseudomonadota</taxon>
        <taxon>Betaproteobacteria</taxon>
        <taxon>Burkholderiales</taxon>
        <taxon>Burkholderiaceae</taxon>
        <taxon>Ralstonia</taxon>
    </lineage>
</organism>
<sequence length="353" mass="37333">MTIKLAIDCMGGDHGVGVTIPAAIHFLAVHEDVEMLLVGQPDAIAAQLKRLHATANPRVHVVPASEVVSMDDPVEVALRKKKDSSMRVAINQLKEGAAQACVSAGNTGALMAVSRYVLKTLDGIDRPAIATAIPNEKGAGTTVLDLGANADCEPEHLLQFAQMASAMVSVVEQKPRPTVGLLNIGEEVIKGNEVVKQAGELLRASDLNFFGNVEGNDIFKGTTDIVVCDGFVGNVALKSTEGLAKMIGEMLRQEFSRSWFTKLLAVVALPVLTRFKRRVDHRRYNGAALLGLRGLVIKSHGSADAYAFEWAIKRAYDAAANGVIARIAQAFESHHDAAGAAPVSTSAPAADAA</sequence>
<evidence type="ECO:0000255" key="1">
    <source>
        <dbReference type="HAMAP-Rule" id="MF_00019"/>
    </source>
</evidence>
<keyword id="KW-0963">Cytoplasm</keyword>
<keyword id="KW-0444">Lipid biosynthesis</keyword>
<keyword id="KW-0443">Lipid metabolism</keyword>
<keyword id="KW-0594">Phospholipid biosynthesis</keyword>
<keyword id="KW-1208">Phospholipid metabolism</keyword>
<keyword id="KW-0808">Transferase</keyword>
<proteinExistence type="inferred from homology"/>
<name>PLSX_RALPJ</name>
<gene>
    <name evidence="1" type="primary">plsX</name>
    <name type="ordered locus">Rpic_0914</name>
</gene>
<comment type="function">
    <text evidence="1">Catalyzes the reversible formation of acyl-phosphate (acyl-PO(4)) from acyl-[acyl-carrier-protein] (acyl-ACP). This enzyme utilizes acyl-ACP as fatty acyl donor, but not acyl-CoA.</text>
</comment>
<comment type="catalytic activity">
    <reaction evidence="1">
        <text>a fatty acyl-[ACP] + phosphate = an acyl phosphate + holo-[ACP]</text>
        <dbReference type="Rhea" id="RHEA:42292"/>
        <dbReference type="Rhea" id="RHEA-COMP:9685"/>
        <dbReference type="Rhea" id="RHEA-COMP:14125"/>
        <dbReference type="ChEBI" id="CHEBI:43474"/>
        <dbReference type="ChEBI" id="CHEBI:59918"/>
        <dbReference type="ChEBI" id="CHEBI:64479"/>
        <dbReference type="ChEBI" id="CHEBI:138651"/>
        <dbReference type="EC" id="2.3.1.274"/>
    </reaction>
</comment>
<comment type="pathway">
    <text evidence="1">Lipid metabolism; phospholipid metabolism.</text>
</comment>
<comment type="subunit">
    <text evidence="1">Homodimer. Probably interacts with PlsY.</text>
</comment>
<comment type="subcellular location">
    <subcellularLocation>
        <location evidence="1">Cytoplasm</location>
    </subcellularLocation>
    <text evidence="1">Associated with the membrane possibly through PlsY.</text>
</comment>
<comment type="similarity">
    <text evidence="1">Belongs to the PlsX family.</text>
</comment>
<feature type="chain" id="PRO_1000089929" description="Phosphate acyltransferase">
    <location>
        <begin position="1"/>
        <end position="353"/>
    </location>
</feature>
<dbReference type="EC" id="2.3.1.274" evidence="1"/>
<dbReference type="EMBL" id="CP001068">
    <property type="protein sequence ID" value="ACD26064.1"/>
    <property type="molecule type" value="Genomic_DNA"/>
</dbReference>
<dbReference type="SMR" id="B2U967"/>
<dbReference type="STRING" id="402626.Rpic_0914"/>
<dbReference type="KEGG" id="rpi:Rpic_0914"/>
<dbReference type="eggNOG" id="COG0416">
    <property type="taxonomic scope" value="Bacteria"/>
</dbReference>
<dbReference type="HOGENOM" id="CLU_039379_1_0_4"/>
<dbReference type="UniPathway" id="UPA00085"/>
<dbReference type="GO" id="GO:0005737">
    <property type="term" value="C:cytoplasm"/>
    <property type="evidence" value="ECO:0007669"/>
    <property type="project" value="UniProtKB-SubCell"/>
</dbReference>
<dbReference type="GO" id="GO:0043811">
    <property type="term" value="F:phosphate:acyl-[acyl carrier protein] acyltransferase activity"/>
    <property type="evidence" value="ECO:0007669"/>
    <property type="project" value="UniProtKB-UniRule"/>
</dbReference>
<dbReference type="GO" id="GO:0006633">
    <property type="term" value="P:fatty acid biosynthetic process"/>
    <property type="evidence" value="ECO:0007669"/>
    <property type="project" value="UniProtKB-UniRule"/>
</dbReference>
<dbReference type="GO" id="GO:0008654">
    <property type="term" value="P:phospholipid biosynthetic process"/>
    <property type="evidence" value="ECO:0007669"/>
    <property type="project" value="UniProtKB-KW"/>
</dbReference>
<dbReference type="Gene3D" id="3.40.718.10">
    <property type="entry name" value="Isopropylmalate Dehydrogenase"/>
    <property type="match status" value="1"/>
</dbReference>
<dbReference type="HAMAP" id="MF_00019">
    <property type="entry name" value="PlsX"/>
    <property type="match status" value="1"/>
</dbReference>
<dbReference type="InterPro" id="IPR003664">
    <property type="entry name" value="FA_synthesis"/>
</dbReference>
<dbReference type="InterPro" id="IPR012281">
    <property type="entry name" value="Phospholipid_synth_PlsX-like"/>
</dbReference>
<dbReference type="NCBIfam" id="TIGR00182">
    <property type="entry name" value="plsX"/>
    <property type="match status" value="1"/>
</dbReference>
<dbReference type="PANTHER" id="PTHR30100">
    <property type="entry name" value="FATTY ACID/PHOSPHOLIPID SYNTHESIS PROTEIN PLSX"/>
    <property type="match status" value="1"/>
</dbReference>
<dbReference type="PANTHER" id="PTHR30100:SF1">
    <property type="entry name" value="PHOSPHATE ACYLTRANSFERASE"/>
    <property type="match status" value="1"/>
</dbReference>
<dbReference type="Pfam" id="PF02504">
    <property type="entry name" value="FA_synthesis"/>
    <property type="match status" value="1"/>
</dbReference>
<dbReference type="PIRSF" id="PIRSF002465">
    <property type="entry name" value="Phsphlp_syn_PlsX"/>
    <property type="match status" value="1"/>
</dbReference>
<dbReference type="SUPFAM" id="SSF53659">
    <property type="entry name" value="Isocitrate/Isopropylmalate dehydrogenase-like"/>
    <property type="match status" value="1"/>
</dbReference>
<accession>B2U967</accession>